<sequence>MRIAVIGAMEEEVRILRDKLEQAEIESVAGCEFTKGMLVGHEVILLKSGIGKVNAAMSTTILLERYQPEKVINTGSAGGFHHALNVGDVVISTEVRHHDVDVTAFNYEYGQVPGMPPGFKADKELVALAEQCMKEEENIQVVKGMIATGDSFMSDPNRVAAIRGKFENLYAVEMEAAAVAQVCHQYNVPFVIIRALSDIAGKESNVSFDQFLDQAALHSTNFIVKVLKELK</sequence>
<evidence type="ECO:0000255" key="1">
    <source>
        <dbReference type="HAMAP-Rule" id="MF_01684"/>
    </source>
</evidence>
<gene>
    <name evidence="1" type="primary">mtnN</name>
    <name type="ordered locus">Bcer98_3086</name>
</gene>
<organism>
    <name type="scientific">Bacillus cytotoxicus (strain DSM 22905 / CIP 110041 / 391-98 / NVH 391-98)</name>
    <dbReference type="NCBI Taxonomy" id="315749"/>
    <lineage>
        <taxon>Bacteria</taxon>
        <taxon>Bacillati</taxon>
        <taxon>Bacillota</taxon>
        <taxon>Bacilli</taxon>
        <taxon>Bacillales</taxon>
        <taxon>Bacillaceae</taxon>
        <taxon>Bacillus</taxon>
        <taxon>Bacillus cereus group</taxon>
    </lineage>
</organism>
<protein>
    <recommendedName>
        <fullName evidence="1">5'-methylthioadenosine/S-adenosylhomocysteine nucleosidase</fullName>
        <shortName evidence="1">MTA/SAH nucleosidase</shortName>
        <shortName evidence="1">MTAN</shortName>
        <ecNumber evidence="1">3.2.2.9</ecNumber>
    </recommendedName>
    <alternativeName>
        <fullName evidence="1">5'-deoxyadenosine nucleosidase</fullName>
        <shortName evidence="1">DOA nucleosidase</shortName>
        <shortName evidence="1">dAdo nucleosidase</shortName>
    </alternativeName>
    <alternativeName>
        <fullName evidence="1">5'-methylthioadenosine nucleosidase</fullName>
        <shortName evidence="1">MTA nucleosidase</shortName>
    </alternativeName>
    <alternativeName>
        <fullName evidence="1">S-adenosylhomocysteine nucleosidase</fullName>
        <shortName evidence="1">AdoHcy nucleosidase</shortName>
        <shortName evidence="1">SAH nucleosidase</shortName>
        <shortName evidence="1">SRH nucleosidase</shortName>
    </alternativeName>
</protein>
<dbReference type="EC" id="3.2.2.9" evidence="1"/>
<dbReference type="EMBL" id="CP000764">
    <property type="protein sequence ID" value="ABS23310.1"/>
    <property type="molecule type" value="Genomic_DNA"/>
</dbReference>
<dbReference type="RefSeq" id="WP_012095547.1">
    <property type="nucleotide sequence ID" value="NC_009674.1"/>
</dbReference>
<dbReference type="SMR" id="A7GT52"/>
<dbReference type="STRING" id="315749.Bcer98_3086"/>
<dbReference type="GeneID" id="33898333"/>
<dbReference type="KEGG" id="bcy:Bcer98_3086"/>
<dbReference type="eggNOG" id="COG0775">
    <property type="taxonomic scope" value="Bacteria"/>
</dbReference>
<dbReference type="HOGENOM" id="CLU_031248_2_2_9"/>
<dbReference type="OrthoDB" id="9792278at2"/>
<dbReference type="UniPathway" id="UPA00904">
    <property type="reaction ID" value="UER00871"/>
</dbReference>
<dbReference type="Proteomes" id="UP000002300">
    <property type="component" value="Chromosome"/>
</dbReference>
<dbReference type="GO" id="GO:0005829">
    <property type="term" value="C:cytosol"/>
    <property type="evidence" value="ECO:0007669"/>
    <property type="project" value="TreeGrafter"/>
</dbReference>
<dbReference type="GO" id="GO:0008782">
    <property type="term" value="F:adenosylhomocysteine nucleosidase activity"/>
    <property type="evidence" value="ECO:0007669"/>
    <property type="project" value="UniProtKB-UniRule"/>
</dbReference>
<dbReference type="GO" id="GO:0008930">
    <property type="term" value="F:methylthioadenosine nucleosidase activity"/>
    <property type="evidence" value="ECO:0007669"/>
    <property type="project" value="UniProtKB-UniRule"/>
</dbReference>
<dbReference type="GO" id="GO:0019509">
    <property type="term" value="P:L-methionine salvage from methylthioadenosine"/>
    <property type="evidence" value="ECO:0007669"/>
    <property type="project" value="UniProtKB-UniRule"/>
</dbReference>
<dbReference type="GO" id="GO:0019284">
    <property type="term" value="P:L-methionine salvage from S-adenosylmethionine"/>
    <property type="evidence" value="ECO:0007669"/>
    <property type="project" value="TreeGrafter"/>
</dbReference>
<dbReference type="GO" id="GO:0009164">
    <property type="term" value="P:nucleoside catabolic process"/>
    <property type="evidence" value="ECO:0007669"/>
    <property type="project" value="InterPro"/>
</dbReference>
<dbReference type="CDD" id="cd09008">
    <property type="entry name" value="MTAN"/>
    <property type="match status" value="1"/>
</dbReference>
<dbReference type="FunFam" id="3.40.50.1580:FF:000001">
    <property type="entry name" value="MTA/SAH nucleosidase family protein"/>
    <property type="match status" value="1"/>
</dbReference>
<dbReference type="Gene3D" id="3.40.50.1580">
    <property type="entry name" value="Nucleoside phosphorylase domain"/>
    <property type="match status" value="1"/>
</dbReference>
<dbReference type="HAMAP" id="MF_01684">
    <property type="entry name" value="Salvage_MtnN"/>
    <property type="match status" value="1"/>
</dbReference>
<dbReference type="InterPro" id="IPR010049">
    <property type="entry name" value="MTA_SAH_Nsdase"/>
</dbReference>
<dbReference type="InterPro" id="IPR000845">
    <property type="entry name" value="Nucleoside_phosphorylase_d"/>
</dbReference>
<dbReference type="InterPro" id="IPR035994">
    <property type="entry name" value="Nucleoside_phosphorylase_sf"/>
</dbReference>
<dbReference type="NCBIfam" id="TIGR01704">
    <property type="entry name" value="MTA_SAH-Nsdase"/>
    <property type="match status" value="1"/>
</dbReference>
<dbReference type="NCBIfam" id="NF004079">
    <property type="entry name" value="PRK05584.1"/>
    <property type="match status" value="1"/>
</dbReference>
<dbReference type="PANTHER" id="PTHR46832">
    <property type="entry name" value="5'-METHYLTHIOADENOSINE/S-ADENOSYLHOMOCYSTEINE NUCLEOSIDASE"/>
    <property type="match status" value="1"/>
</dbReference>
<dbReference type="PANTHER" id="PTHR46832:SF1">
    <property type="entry name" value="5'-METHYLTHIOADENOSINE_S-ADENOSYLHOMOCYSTEINE NUCLEOSIDASE"/>
    <property type="match status" value="1"/>
</dbReference>
<dbReference type="Pfam" id="PF01048">
    <property type="entry name" value="PNP_UDP_1"/>
    <property type="match status" value="1"/>
</dbReference>
<dbReference type="SUPFAM" id="SSF53167">
    <property type="entry name" value="Purine and uridine phosphorylases"/>
    <property type="match status" value="1"/>
</dbReference>
<comment type="function">
    <text evidence="1">Catalyzes the irreversible cleavage of the glycosidic bond in both 5'-methylthioadenosine (MTA) and S-adenosylhomocysteine (SAH/AdoHcy) to adenine and the corresponding thioribose, 5'-methylthioribose and S-ribosylhomocysteine, respectively. Also cleaves 5'-deoxyadenosine, a toxic by-product of radical S-adenosylmethionine (SAM) enzymes, into 5-deoxyribose and adenine.</text>
</comment>
<comment type="catalytic activity">
    <reaction evidence="1">
        <text>S-adenosyl-L-homocysteine + H2O = S-(5-deoxy-D-ribos-5-yl)-L-homocysteine + adenine</text>
        <dbReference type="Rhea" id="RHEA:17805"/>
        <dbReference type="ChEBI" id="CHEBI:15377"/>
        <dbReference type="ChEBI" id="CHEBI:16708"/>
        <dbReference type="ChEBI" id="CHEBI:57856"/>
        <dbReference type="ChEBI" id="CHEBI:58195"/>
        <dbReference type="EC" id="3.2.2.9"/>
    </reaction>
</comment>
<comment type="catalytic activity">
    <reaction evidence="1">
        <text>S-methyl-5'-thioadenosine + H2O = 5-(methylsulfanyl)-D-ribose + adenine</text>
        <dbReference type="Rhea" id="RHEA:13617"/>
        <dbReference type="ChEBI" id="CHEBI:15377"/>
        <dbReference type="ChEBI" id="CHEBI:16708"/>
        <dbReference type="ChEBI" id="CHEBI:17509"/>
        <dbReference type="ChEBI" id="CHEBI:78440"/>
        <dbReference type="EC" id="3.2.2.9"/>
    </reaction>
</comment>
<comment type="catalytic activity">
    <reaction evidence="1">
        <text>5'-deoxyadenosine + H2O = 5-deoxy-D-ribose + adenine</text>
        <dbReference type="Rhea" id="RHEA:29859"/>
        <dbReference type="ChEBI" id="CHEBI:15377"/>
        <dbReference type="ChEBI" id="CHEBI:16708"/>
        <dbReference type="ChEBI" id="CHEBI:17319"/>
        <dbReference type="ChEBI" id="CHEBI:149540"/>
        <dbReference type="EC" id="3.2.2.9"/>
    </reaction>
    <physiologicalReaction direction="left-to-right" evidence="1">
        <dbReference type="Rhea" id="RHEA:29860"/>
    </physiologicalReaction>
</comment>
<comment type="pathway">
    <text evidence="1">Amino-acid biosynthesis; L-methionine biosynthesis via salvage pathway; S-methyl-5-thio-alpha-D-ribose 1-phosphate from S-methyl-5'-thioadenosine (hydrolase route): step 1/2.</text>
</comment>
<comment type="similarity">
    <text evidence="1">Belongs to the PNP/UDP phosphorylase family. MtnN subfamily.</text>
</comment>
<keyword id="KW-0028">Amino-acid biosynthesis</keyword>
<keyword id="KW-0378">Hydrolase</keyword>
<keyword id="KW-0486">Methionine biosynthesis</keyword>
<feature type="chain" id="PRO_0000359276" description="5'-methylthioadenosine/S-adenosylhomocysteine nucleosidase">
    <location>
        <begin position="1"/>
        <end position="231"/>
    </location>
</feature>
<feature type="active site" description="Proton acceptor" evidence="1">
    <location>
        <position position="12"/>
    </location>
</feature>
<feature type="active site" description="Proton donor" evidence="1">
    <location>
        <position position="198"/>
    </location>
</feature>
<feature type="binding site" evidence="1">
    <location>
        <position position="78"/>
    </location>
    <ligand>
        <name>substrate</name>
    </ligand>
</feature>
<feature type="binding site" evidence="1">
    <location>
        <position position="153"/>
    </location>
    <ligand>
        <name>substrate</name>
    </ligand>
</feature>
<feature type="binding site" evidence="1">
    <location>
        <begin position="174"/>
        <end position="175"/>
    </location>
    <ligand>
        <name>substrate</name>
    </ligand>
</feature>
<accession>A7GT52</accession>
<name>MTNN_BACCN</name>
<reference key="1">
    <citation type="journal article" date="2008" name="Chem. Biol. Interact.">
        <title>Extending the Bacillus cereus group genomics to putative food-borne pathogens of different toxicity.</title>
        <authorList>
            <person name="Lapidus A."/>
            <person name="Goltsman E."/>
            <person name="Auger S."/>
            <person name="Galleron N."/>
            <person name="Segurens B."/>
            <person name="Dossat C."/>
            <person name="Land M.L."/>
            <person name="Broussolle V."/>
            <person name="Brillard J."/>
            <person name="Guinebretiere M.-H."/>
            <person name="Sanchis V."/>
            <person name="Nguen-the C."/>
            <person name="Lereclus D."/>
            <person name="Richardson P."/>
            <person name="Wincker P."/>
            <person name="Weissenbach J."/>
            <person name="Ehrlich S.D."/>
            <person name="Sorokin A."/>
        </authorList>
    </citation>
    <scope>NUCLEOTIDE SEQUENCE [LARGE SCALE GENOMIC DNA]</scope>
    <source>
        <strain>DSM 22905 / CIP 110041 / 391-98 / NVH 391-98</strain>
    </source>
</reference>
<proteinExistence type="inferred from homology"/>